<feature type="signal peptide" evidence="2">
    <location>
        <begin position="1"/>
        <end position="18"/>
    </location>
</feature>
<feature type="chain" id="PRO_0000311110" description="Pleckstrin homology domain-containing family H member 3">
    <location>
        <begin position="19"/>
        <end position="791"/>
    </location>
</feature>
<feature type="domain" description="PH" evidence="4">
    <location>
        <begin position="95"/>
        <end position="199"/>
    </location>
</feature>
<feature type="domain" description="MyTH4" evidence="5">
    <location>
        <begin position="237"/>
        <end position="399"/>
    </location>
</feature>
<feature type="domain" description="FERM" evidence="3">
    <location>
        <begin position="404"/>
        <end position="755"/>
    </location>
</feature>
<feature type="region of interest" description="Disordered" evidence="6">
    <location>
        <begin position="29"/>
        <end position="71"/>
    </location>
</feature>
<feature type="region of interest" description="Disordered" evidence="6">
    <location>
        <begin position="549"/>
        <end position="580"/>
    </location>
</feature>
<feature type="region of interest" description="Disordered" evidence="6">
    <location>
        <begin position="593"/>
        <end position="623"/>
    </location>
</feature>
<feature type="region of interest" description="Disordered" evidence="6">
    <location>
        <begin position="748"/>
        <end position="791"/>
    </location>
</feature>
<feature type="compositionally biased region" description="Acidic residues" evidence="6">
    <location>
        <begin position="29"/>
        <end position="41"/>
    </location>
</feature>
<feature type="compositionally biased region" description="Polar residues" evidence="6">
    <location>
        <begin position="59"/>
        <end position="71"/>
    </location>
</feature>
<feature type="compositionally biased region" description="Low complexity" evidence="6">
    <location>
        <begin position="549"/>
        <end position="559"/>
    </location>
</feature>
<feature type="compositionally biased region" description="Basic residues" evidence="6">
    <location>
        <begin position="594"/>
        <end position="605"/>
    </location>
</feature>
<feature type="compositionally biased region" description="Polar residues" evidence="6">
    <location>
        <begin position="754"/>
        <end position="791"/>
    </location>
</feature>
<feature type="modified residue" description="Phosphoserine" evidence="1">
    <location>
        <position position="30"/>
    </location>
</feature>
<feature type="modified residue" description="Omega-N-methylarginine" evidence="1">
    <location>
        <position position="636"/>
    </location>
</feature>
<protein>
    <recommendedName>
        <fullName>Pleckstrin homology domain-containing family H member 3</fullName>
        <shortName>PH domain-containing family H member 3</shortName>
    </recommendedName>
</protein>
<dbReference type="EMBL" id="BC107561">
    <property type="protein sequence ID" value="AAI07562.1"/>
    <property type="molecule type" value="mRNA"/>
</dbReference>
<dbReference type="RefSeq" id="NP_001032279.1">
    <property type="nucleotide sequence ID" value="NM_001037202.1"/>
</dbReference>
<dbReference type="SMR" id="Q3B7L1"/>
<dbReference type="FunCoup" id="Q3B7L1">
    <property type="interactions" value="115"/>
</dbReference>
<dbReference type="STRING" id="10116.ENSRNOP00000027452"/>
<dbReference type="PhosphoSitePlus" id="Q3B7L1"/>
<dbReference type="PaxDb" id="10116-ENSRNOP00000027452"/>
<dbReference type="GeneID" id="360634"/>
<dbReference type="KEGG" id="rno:360634"/>
<dbReference type="UCSC" id="RGD:1304854">
    <property type="organism name" value="rat"/>
</dbReference>
<dbReference type="AGR" id="RGD:1304854"/>
<dbReference type="CTD" id="79990"/>
<dbReference type="RGD" id="1304854">
    <property type="gene designation" value="Plekhh3"/>
</dbReference>
<dbReference type="VEuPathDB" id="HostDB:ENSRNOG00000020238"/>
<dbReference type="eggNOG" id="KOG4229">
    <property type="taxonomic scope" value="Eukaryota"/>
</dbReference>
<dbReference type="HOGENOM" id="CLU_001626_4_0_1"/>
<dbReference type="InParanoid" id="Q3B7L1"/>
<dbReference type="PhylomeDB" id="Q3B7L1"/>
<dbReference type="PRO" id="PR:Q3B7L1"/>
<dbReference type="Proteomes" id="UP000002494">
    <property type="component" value="Chromosome 10"/>
</dbReference>
<dbReference type="Bgee" id="ENSRNOG00000020238">
    <property type="expression patterns" value="Expressed in quadriceps femoris and 18 other cell types or tissues"/>
</dbReference>
<dbReference type="GO" id="GO:0005856">
    <property type="term" value="C:cytoskeleton"/>
    <property type="evidence" value="ECO:0007669"/>
    <property type="project" value="InterPro"/>
</dbReference>
<dbReference type="GO" id="GO:0007165">
    <property type="term" value="P:signal transduction"/>
    <property type="evidence" value="ECO:0007669"/>
    <property type="project" value="InterPro"/>
</dbReference>
<dbReference type="CDD" id="cd14473">
    <property type="entry name" value="FERM_B-lobe"/>
    <property type="match status" value="1"/>
</dbReference>
<dbReference type="CDD" id="cd13297">
    <property type="entry name" value="PH3_MyoX-like"/>
    <property type="match status" value="1"/>
</dbReference>
<dbReference type="FunFam" id="1.25.40.530:FF:000001">
    <property type="entry name" value="Pleckstrin homology domain-containing family H member 2"/>
    <property type="match status" value="1"/>
</dbReference>
<dbReference type="FunFam" id="2.30.29.30:FF:000276">
    <property type="entry name" value="pleckstrin homology domain-containing family H member 3"/>
    <property type="match status" value="1"/>
</dbReference>
<dbReference type="Gene3D" id="1.20.80.10">
    <property type="match status" value="1"/>
</dbReference>
<dbReference type="Gene3D" id="1.25.40.530">
    <property type="entry name" value="MyTH4 domain"/>
    <property type="match status" value="1"/>
</dbReference>
<dbReference type="Gene3D" id="3.10.20.90">
    <property type="entry name" value="Phosphatidylinositol 3-kinase Catalytic Subunit, Chain A, domain 1"/>
    <property type="match status" value="1"/>
</dbReference>
<dbReference type="Gene3D" id="2.30.29.30">
    <property type="entry name" value="Pleckstrin-homology domain (PH domain)/Phosphotyrosine-binding domain (PTB)"/>
    <property type="match status" value="2"/>
</dbReference>
<dbReference type="InterPro" id="IPR051724">
    <property type="entry name" value="Actin_motor_Myosin"/>
</dbReference>
<dbReference type="InterPro" id="IPR019749">
    <property type="entry name" value="Band_41_domain"/>
</dbReference>
<dbReference type="InterPro" id="IPR014352">
    <property type="entry name" value="FERM/acyl-CoA-bd_prot_sf"/>
</dbReference>
<dbReference type="InterPro" id="IPR035963">
    <property type="entry name" value="FERM_2"/>
</dbReference>
<dbReference type="InterPro" id="IPR019748">
    <property type="entry name" value="FERM_central"/>
</dbReference>
<dbReference type="InterPro" id="IPR000299">
    <property type="entry name" value="FERM_domain"/>
</dbReference>
<dbReference type="InterPro" id="IPR000857">
    <property type="entry name" value="MyTH4_dom"/>
</dbReference>
<dbReference type="InterPro" id="IPR038185">
    <property type="entry name" value="MyTH4_dom_sf"/>
</dbReference>
<dbReference type="InterPro" id="IPR011993">
    <property type="entry name" value="PH-like_dom_sf"/>
</dbReference>
<dbReference type="InterPro" id="IPR001849">
    <property type="entry name" value="PH_domain"/>
</dbReference>
<dbReference type="InterPro" id="IPR000159">
    <property type="entry name" value="RA_dom"/>
</dbReference>
<dbReference type="PANTHER" id="PTHR46049">
    <property type="entry name" value="AGAP003327-PA"/>
    <property type="match status" value="1"/>
</dbReference>
<dbReference type="PANTHER" id="PTHR46049:SF5">
    <property type="entry name" value="PLECKSTRIN HOMOLOGY DOMAIN-CONTAINING FAMILY H MEMBER 3"/>
    <property type="match status" value="1"/>
</dbReference>
<dbReference type="Pfam" id="PF00373">
    <property type="entry name" value="FERM_M"/>
    <property type="match status" value="1"/>
</dbReference>
<dbReference type="Pfam" id="PF00784">
    <property type="entry name" value="MyTH4"/>
    <property type="match status" value="1"/>
</dbReference>
<dbReference type="Pfam" id="PF21989">
    <property type="entry name" value="RA_2"/>
    <property type="match status" value="1"/>
</dbReference>
<dbReference type="SMART" id="SM00295">
    <property type="entry name" value="B41"/>
    <property type="match status" value="1"/>
</dbReference>
<dbReference type="SMART" id="SM00139">
    <property type="entry name" value="MyTH4"/>
    <property type="match status" value="1"/>
</dbReference>
<dbReference type="SMART" id="SM00233">
    <property type="entry name" value="PH"/>
    <property type="match status" value="1"/>
</dbReference>
<dbReference type="SUPFAM" id="SSF50729">
    <property type="entry name" value="PH domain-like"/>
    <property type="match status" value="1"/>
</dbReference>
<dbReference type="SUPFAM" id="SSF47031">
    <property type="entry name" value="Second domain of FERM"/>
    <property type="match status" value="1"/>
</dbReference>
<dbReference type="PROSITE" id="PS50057">
    <property type="entry name" value="FERM_3"/>
    <property type="match status" value="1"/>
</dbReference>
<dbReference type="PROSITE" id="PS51016">
    <property type="entry name" value="MYTH4"/>
    <property type="match status" value="1"/>
</dbReference>
<dbReference type="PROSITE" id="PS50003">
    <property type="entry name" value="PH_DOMAIN"/>
    <property type="match status" value="1"/>
</dbReference>
<organism>
    <name type="scientific">Rattus norvegicus</name>
    <name type="common">Rat</name>
    <dbReference type="NCBI Taxonomy" id="10116"/>
    <lineage>
        <taxon>Eukaryota</taxon>
        <taxon>Metazoa</taxon>
        <taxon>Chordata</taxon>
        <taxon>Craniata</taxon>
        <taxon>Vertebrata</taxon>
        <taxon>Euteleostomi</taxon>
        <taxon>Mammalia</taxon>
        <taxon>Eutheria</taxon>
        <taxon>Euarchontoglires</taxon>
        <taxon>Glires</taxon>
        <taxon>Rodentia</taxon>
        <taxon>Myomorpha</taxon>
        <taxon>Muroidea</taxon>
        <taxon>Muridae</taxon>
        <taxon>Murinae</taxon>
        <taxon>Rattus</taxon>
    </lineage>
</organism>
<keyword id="KW-0488">Methylation</keyword>
<keyword id="KW-0597">Phosphoprotein</keyword>
<keyword id="KW-1185">Reference proteome</keyword>
<keyword id="KW-0732">Signal</keyword>
<proteinExistence type="evidence at transcript level"/>
<reference key="1">
    <citation type="journal article" date="2004" name="Genome Res.">
        <title>The status, quality, and expansion of the NIH full-length cDNA project: the Mammalian Gene Collection (MGC).</title>
        <authorList>
            <consortium name="The MGC Project Team"/>
        </authorList>
    </citation>
    <scope>NUCLEOTIDE SEQUENCE [LARGE SCALE MRNA]</scope>
    <source>
        <tissue>Prostate</tissue>
    </source>
</reference>
<accession>Q3B7L1</accession>
<name>PKHH3_RAT</name>
<gene>
    <name type="primary">Plekhh3</name>
</gene>
<evidence type="ECO:0000250" key="1">
    <source>
        <dbReference type="UniProtKB" id="Q7Z736"/>
    </source>
</evidence>
<evidence type="ECO:0000255" key="2"/>
<evidence type="ECO:0000255" key="3">
    <source>
        <dbReference type="PROSITE-ProRule" id="PRU00084"/>
    </source>
</evidence>
<evidence type="ECO:0000255" key="4">
    <source>
        <dbReference type="PROSITE-ProRule" id="PRU00145"/>
    </source>
</evidence>
<evidence type="ECO:0000255" key="5">
    <source>
        <dbReference type="PROSITE-ProRule" id="PRU00359"/>
    </source>
</evidence>
<evidence type="ECO:0000256" key="6">
    <source>
        <dbReference type="SAM" id="MobiDB-lite"/>
    </source>
</evidence>
<sequence length="791" mass="85169">MPLPGGLWWLLCCRRGFTLLHRDYGDGELSGDGDEDEDDETFELRSPSPAGGGRGSLDVTLTQPTRNGPITDRLQSWEETWSLIPDKGLPEDDPDVIVKGWLYREPRGGGARPWLLPRRAWFVLTRDSLDQFSSSGKGARRLGSLVLTSLCSVTGPERRPKETGLWSVTVSGRKHSIRLCSPRQAEAERWGVALREVIASKAPLETPTQLLLRDIQESGGDPEAVALIYRRNPILRHTSSALYAPLLPLPYEVSAPGPGYAPLREEAVRLFLALQALEGARRPGPLMQGVLQTCRDLPALQDELFLQLAKQTSGPAGPPGLPATQDPAALRYWQLLTCMSCTFRPGGAVRGHLLGHLERTEQALPDSELAEYARFIRKALGRTRGRELVPSLAEISALSRRQELLCTVHCPGAGACPVSIDSHTTAGEVARELVGRLGLARSRNAFALYEQRGAQERALAGGTLVADVLTSLTSEEVGLEDSPDSGWRLCLRLHGPLHPEGLSPEGHELPFLFEQAHALLLRGRPPPPDDTLRALAALRLQSLHRDFSPRGPLPLLDRLMPPPAPPREQPSRPARRPPPSAALLAGALWSPGLAKRRAERARRIGTGRSTESTAQVGGGGGGSTTAAVLGGWKRLRGMGQAEAMAAYLALAAQCPGFGAARYDVLELSTEPGGGAPQKLCLGLGAKAMSLSRPGESEPIHSVSYGHVAACQLIGPHTLALRVGDSQLLLQSPQVEEIMELVNAYLANPSPERPCSSSGPPSQDLSDTSPPSQHQVLEKPQGQSGCLRQLQD</sequence>